<feature type="chain" id="PRO_1000164877" description="Cyclic pyranopterin monophosphate synthase">
    <location>
        <begin position="1"/>
        <end position="161"/>
    </location>
</feature>
<feature type="active site" evidence="1">
    <location>
        <position position="130"/>
    </location>
</feature>
<feature type="binding site" evidence="1">
    <location>
        <begin position="75"/>
        <end position="77"/>
    </location>
    <ligand>
        <name>substrate</name>
    </ligand>
</feature>
<feature type="binding site" evidence="1">
    <location>
        <begin position="115"/>
        <end position="116"/>
    </location>
    <ligand>
        <name>substrate</name>
    </ligand>
</feature>
<gene>
    <name evidence="1" type="primary">moaC</name>
    <name type="ordered locus">BAMEG_5006</name>
</gene>
<reference key="1">
    <citation type="submission" date="2008-10" db="EMBL/GenBank/DDBJ databases">
        <title>Genome sequence of Bacillus anthracis str. CDC 684.</title>
        <authorList>
            <person name="Dodson R.J."/>
            <person name="Munk A.C."/>
            <person name="Brettin T."/>
            <person name="Bruce D."/>
            <person name="Detter C."/>
            <person name="Tapia R."/>
            <person name="Han C."/>
            <person name="Sutton G."/>
            <person name="Sims D."/>
        </authorList>
    </citation>
    <scope>NUCLEOTIDE SEQUENCE [LARGE SCALE GENOMIC DNA]</scope>
    <source>
        <strain>CDC 684 / NRRL 3495</strain>
    </source>
</reference>
<name>MOAC_BACAC</name>
<sequence length="161" mass="17499">MSSFTHFNDQGRAKMVDISDKKATVRTAIACSSIVVTKEIYDKISHNEIGKGDVLAVAQIAGIMAAKRTSDIIPMCHPLLLKGVDVSFDWKQSDEQYRLLIEVKVKTEGSTGVEMEALTAASATALTVYDMCKAVDKGMIIGETYLLEKTGGKSGDYTRKS</sequence>
<keyword id="KW-0456">Lyase</keyword>
<keyword id="KW-0501">Molybdenum cofactor biosynthesis</keyword>
<proteinExistence type="inferred from homology"/>
<evidence type="ECO:0000255" key="1">
    <source>
        <dbReference type="HAMAP-Rule" id="MF_01224"/>
    </source>
</evidence>
<accession>C3LA30</accession>
<comment type="function">
    <text evidence="1">Catalyzes the conversion of (8S)-3',8-cyclo-7,8-dihydroguanosine 5'-triphosphate to cyclic pyranopterin monophosphate (cPMP).</text>
</comment>
<comment type="catalytic activity">
    <reaction evidence="1">
        <text>(8S)-3',8-cyclo-7,8-dihydroguanosine 5'-triphosphate = cyclic pyranopterin phosphate + diphosphate</text>
        <dbReference type="Rhea" id="RHEA:49580"/>
        <dbReference type="ChEBI" id="CHEBI:33019"/>
        <dbReference type="ChEBI" id="CHEBI:59648"/>
        <dbReference type="ChEBI" id="CHEBI:131766"/>
        <dbReference type="EC" id="4.6.1.17"/>
    </reaction>
</comment>
<comment type="pathway">
    <text evidence="1">Cofactor biosynthesis; molybdopterin biosynthesis.</text>
</comment>
<comment type="subunit">
    <text evidence="1">Homohexamer; trimer of dimers.</text>
</comment>
<comment type="similarity">
    <text evidence="1">Belongs to the MoaC family.</text>
</comment>
<dbReference type="EC" id="4.6.1.17" evidence="1"/>
<dbReference type="EMBL" id="CP001215">
    <property type="protein sequence ID" value="ACP14500.1"/>
    <property type="molecule type" value="Genomic_DNA"/>
</dbReference>
<dbReference type="RefSeq" id="WP_000094141.1">
    <property type="nucleotide sequence ID" value="NC_012581.1"/>
</dbReference>
<dbReference type="SMR" id="C3LA30"/>
<dbReference type="GeneID" id="45024593"/>
<dbReference type="KEGG" id="bah:BAMEG_5006"/>
<dbReference type="HOGENOM" id="CLU_074693_1_1_9"/>
<dbReference type="UniPathway" id="UPA00344"/>
<dbReference type="GO" id="GO:0061799">
    <property type="term" value="F:cyclic pyranopterin monophosphate synthase activity"/>
    <property type="evidence" value="ECO:0007669"/>
    <property type="project" value="UniProtKB-UniRule"/>
</dbReference>
<dbReference type="GO" id="GO:0006777">
    <property type="term" value="P:Mo-molybdopterin cofactor biosynthetic process"/>
    <property type="evidence" value="ECO:0007669"/>
    <property type="project" value="UniProtKB-UniRule"/>
</dbReference>
<dbReference type="CDD" id="cd01420">
    <property type="entry name" value="MoaC_PE"/>
    <property type="match status" value="1"/>
</dbReference>
<dbReference type="Gene3D" id="3.30.70.640">
    <property type="entry name" value="Molybdopterin cofactor biosynthesis C (MoaC) domain"/>
    <property type="match status" value="1"/>
</dbReference>
<dbReference type="HAMAP" id="MF_01224_B">
    <property type="entry name" value="MoaC_B"/>
    <property type="match status" value="1"/>
</dbReference>
<dbReference type="InterPro" id="IPR023045">
    <property type="entry name" value="MoaC"/>
</dbReference>
<dbReference type="InterPro" id="IPR047594">
    <property type="entry name" value="MoaC_bact/euk"/>
</dbReference>
<dbReference type="InterPro" id="IPR036522">
    <property type="entry name" value="MoaC_sf"/>
</dbReference>
<dbReference type="InterPro" id="IPR050105">
    <property type="entry name" value="MoCo_biosynth_MoaA/MoaC"/>
</dbReference>
<dbReference type="InterPro" id="IPR002820">
    <property type="entry name" value="Mopterin_CF_biosynth-C_dom"/>
</dbReference>
<dbReference type="NCBIfam" id="TIGR00581">
    <property type="entry name" value="moaC"/>
    <property type="match status" value="1"/>
</dbReference>
<dbReference type="NCBIfam" id="NF006870">
    <property type="entry name" value="PRK09364.1"/>
    <property type="match status" value="1"/>
</dbReference>
<dbReference type="PANTHER" id="PTHR22960:SF29">
    <property type="entry name" value="CYCLIC PYRANOPTERIN MONOPHOSPHATE SYNTHASE"/>
    <property type="match status" value="1"/>
</dbReference>
<dbReference type="PANTHER" id="PTHR22960">
    <property type="entry name" value="MOLYBDOPTERIN COFACTOR SYNTHESIS PROTEIN A"/>
    <property type="match status" value="1"/>
</dbReference>
<dbReference type="Pfam" id="PF01967">
    <property type="entry name" value="MoaC"/>
    <property type="match status" value="1"/>
</dbReference>
<dbReference type="SUPFAM" id="SSF55040">
    <property type="entry name" value="Molybdenum cofactor biosynthesis protein C, MoaC"/>
    <property type="match status" value="1"/>
</dbReference>
<organism>
    <name type="scientific">Bacillus anthracis (strain CDC 684 / NRRL 3495)</name>
    <dbReference type="NCBI Taxonomy" id="568206"/>
    <lineage>
        <taxon>Bacteria</taxon>
        <taxon>Bacillati</taxon>
        <taxon>Bacillota</taxon>
        <taxon>Bacilli</taxon>
        <taxon>Bacillales</taxon>
        <taxon>Bacillaceae</taxon>
        <taxon>Bacillus</taxon>
        <taxon>Bacillus cereus group</taxon>
    </lineage>
</organism>
<protein>
    <recommendedName>
        <fullName evidence="1">Cyclic pyranopterin monophosphate synthase</fullName>
        <ecNumber evidence="1">4.6.1.17</ecNumber>
    </recommendedName>
    <alternativeName>
        <fullName evidence="1">Molybdenum cofactor biosynthesis protein C</fullName>
    </alternativeName>
</protein>